<protein>
    <recommendedName>
        <fullName evidence="1">Large ribosomal subunit protein uL11</fullName>
    </recommendedName>
    <alternativeName>
        <fullName evidence="2">50S ribosomal protein L11</fullName>
    </alternativeName>
</protein>
<gene>
    <name evidence="1" type="primary">rplK</name>
    <name type="ordered locus">Fphi_1042</name>
</gene>
<feature type="chain" id="PRO_1000083383" description="Large ribosomal subunit protein uL11">
    <location>
        <begin position="1"/>
        <end position="145"/>
    </location>
</feature>
<evidence type="ECO:0000255" key="1">
    <source>
        <dbReference type="HAMAP-Rule" id="MF_00736"/>
    </source>
</evidence>
<evidence type="ECO:0000305" key="2"/>
<dbReference type="EMBL" id="CP000937">
    <property type="protein sequence ID" value="ABZ87264.1"/>
    <property type="molecule type" value="Genomic_DNA"/>
</dbReference>
<dbReference type="SMR" id="B0TX06"/>
<dbReference type="KEGG" id="fph:Fphi_1042"/>
<dbReference type="eggNOG" id="COG0080">
    <property type="taxonomic scope" value="Bacteria"/>
</dbReference>
<dbReference type="HOGENOM" id="CLU_074237_2_0_6"/>
<dbReference type="GO" id="GO:0022625">
    <property type="term" value="C:cytosolic large ribosomal subunit"/>
    <property type="evidence" value="ECO:0007669"/>
    <property type="project" value="TreeGrafter"/>
</dbReference>
<dbReference type="GO" id="GO:0070180">
    <property type="term" value="F:large ribosomal subunit rRNA binding"/>
    <property type="evidence" value="ECO:0007669"/>
    <property type="project" value="UniProtKB-UniRule"/>
</dbReference>
<dbReference type="GO" id="GO:0003735">
    <property type="term" value="F:structural constituent of ribosome"/>
    <property type="evidence" value="ECO:0007669"/>
    <property type="project" value="InterPro"/>
</dbReference>
<dbReference type="GO" id="GO:0006412">
    <property type="term" value="P:translation"/>
    <property type="evidence" value="ECO:0007669"/>
    <property type="project" value="UniProtKB-UniRule"/>
</dbReference>
<dbReference type="CDD" id="cd00349">
    <property type="entry name" value="Ribosomal_L11"/>
    <property type="match status" value="1"/>
</dbReference>
<dbReference type="FunFam" id="1.10.10.250:FF:000001">
    <property type="entry name" value="50S ribosomal protein L11"/>
    <property type="match status" value="1"/>
</dbReference>
<dbReference type="FunFam" id="3.30.1550.10:FF:000001">
    <property type="entry name" value="50S ribosomal protein L11"/>
    <property type="match status" value="1"/>
</dbReference>
<dbReference type="Gene3D" id="1.10.10.250">
    <property type="entry name" value="Ribosomal protein L11, C-terminal domain"/>
    <property type="match status" value="1"/>
</dbReference>
<dbReference type="Gene3D" id="3.30.1550.10">
    <property type="entry name" value="Ribosomal protein L11/L12, N-terminal domain"/>
    <property type="match status" value="1"/>
</dbReference>
<dbReference type="HAMAP" id="MF_00736">
    <property type="entry name" value="Ribosomal_uL11"/>
    <property type="match status" value="1"/>
</dbReference>
<dbReference type="InterPro" id="IPR000911">
    <property type="entry name" value="Ribosomal_uL11"/>
</dbReference>
<dbReference type="InterPro" id="IPR006519">
    <property type="entry name" value="Ribosomal_uL11_bac-typ"/>
</dbReference>
<dbReference type="InterPro" id="IPR020783">
    <property type="entry name" value="Ribosomal_uL11_C"/>
</dbReference>
<dbReference type="InterPro" id="IPR036769">
    <property type="entry name" value="Ribosomal_uL11_C_sf"/>
</dbReference>
<dbReference type="InterPro" id="IPR020785">
    <property type="entry name" value="Ribosomal_uL11_CS"/>
</dbReference>
<dbReference type="InterPro" id="IPR020784">
    <property type="entry name" value="Ribosomal_uL11_N"/>
</dbReference>
<dbReference type="InterPro" id="IPR036796">
    <property type="entry name" value="Ribosomal_uL11_N_sf"/>
</dbReference>
<dbReference type="NCBIfam" id="TIGR01632">
    <property type="entry name" value="L11_bact"/>
    <property type="match status" value="1"/>
</dbReference>
<dbReference type="PANTHER" id="PTHR11661">
    <property type="entry name" value="60S RIBOSOMAL PROTEIN L12"/>
    <property type="match status" value="1"/>
</dbReference>
<dbReference type="PANTHER" id="PTHR11661:SF1">
    <property type="entry name" value="LARGE RIBOSOMAL SUBUNIT PROTEIN UL11M"/>
    <property type="match status" value="1"/>
</dbReference>
<dbReference type="Pfam" id="PF00298">
    <property type="entry name" value="Ribosomal_L11"/>
    <property type="match status" value="1"/>
</dbReference>
<dbReference type="Pfam" id="PF03946">
    <property type="entry name" value="Ribosomal_L11_N"/>
    <property type="match status" value="1"/>
</dbReference>
<dbReference type="SMART" id="SM00649">
    <property type="entry name" value="RL11"/>
    <property type="match status" value="1"/>
</dbReference>
<dbReference type="SUPFAM" id="SSF54747">
    <property type="entry name" value="Ribosomal L11/L12e N-terminal domain"/>
    <property type="match status" value="1"/>
</dbReference>
<dbReference type="SUPFAM" id="SSF46906">
    <property type="entry name" value="Ribosomal protein L11, C-terminal domain"/>
    <property type="match status" value="1"/>
</dbReference>
<dbReference type="PROSITE" id="PS00359">
    <property type="entry name" value="RIBOSOMAL_L11"/>
    <property type="match status" value="1"/>
</dbReference>
<name>RL11_FRAP2</name>
<reference key="1">
    <citation type="submission" date="2007-12" db="EMBL/GenBank/DDBJ databases">
        <title>Complete sequence of chromosome of Francisella philomiragia subsp. philomiragia ATCC 25017.</title>
        <authorList>
            <consortium name="US DOE Joint Genome Institute"/>
            <person name="Copeland A."/>
            <person name="Lucas S."/>
            <person name="Lapidus A."/>
            <person name="Barry K."/>
            <person name="Detter J.C."/>
            <person name="Glavina del Rio T."/>
            <person name="Hammon N."/>
            <person name="Israni S."/>
            <person name="Dalin E."/>
            <person name="Tice H."/>
            <person name="Pitluck S."/>
            <person name="Chain P."/>
            <person name="Malfatti S."/>
            <person name="Shin M."/>
            <person name="Vergez L."/>
            <person name="Schmutz J."/>
            <person name="Larimer F."/>
            <person name="Land M."/>
            <person name="Hauser L."/>
            <person name="Richardson P."/>
        </authorList>
    </citation>
    <scope>NUCLEOTIDE SEQUENCE [LARGE SCALE GENOMIC DNA]</scope>
    <source>
        <strain>ATCC 25017 / CCUG 19701 / FSC 153 / O#319-036</strain>
    </source>
</reference>
<comment type="function">
    <text evidence="1">Forms part of the ribosomal stalk which helps the ribosome interact with GTP-bound translation factors.</text>
</comment>
<comment type="subunit">
    <text evidence="1">Part of the ribosomal stalk of the 50S ribosomal subunit. Interacts with L10 and the large rRNA to form the base of the stalk. L10 forms an elongated spine to which L12 dimers bind in a sequential fashion forming a multimeric L10(L12)X complex.</text>
</comment>
<comment type="PTM">
    <text evidence="1">One or more lysine residues are methylated.</text>
</comment>
<comment type="similarity">
    <text evidence="1">Belongs to the universal ribosomal protein uL11 family.</text>
</comment>
<accession>B0TX06</accession>
<organism>
    <name type="scientific">Francisella philomiragia subsp. philomiragia (strain ATCC 25017 / CCUG 19701 / FSC 153 / O#319-036)</name>
    <dbReference type="NCBI Taxonomy" id="484022"/>
    <lineage>
        <taxon>Bacteria</taxon>
        <taxon>Pseudomonadati</taxon>
        <taxon>Pseudomonadota</taxon>
        <taxon>Gammaproteobacteria</taxon>
        <taxon>Thiotrichales</taxon>
        <taxon>Francisellaceae</taxon>
        <taxon>Francisella</taxon>
    </lineage>
</organism>
<sequence>MAKKKIEAIIKLQVAAGKANPSPPIGPALGQHGVNIMGFCKEFNAKTQGMEPGMPIPVEISVYSDRSFTFEMKTPPASYLIKKAIKVKSGSSNPSKDFIGTITREQLEEIAKVKDPDLTAADIDAAVRIIAGSARSMGVKVEGVE</sequence>
<keyword id="KW-0488">Methylation</keyword>
<keyword id="KW-0687">Ribonucleoprotein</keyword>
<keyword id="KW-0689">Ribosomal protein</keyword>
<keyword id="KW-0694">RNA-binding</keyword>
<keyword id="KW-0699">rRNA-binding</keyword>
<proteinExistence type="inferred from homology"/>